<dbReference type="EMBL" id="CP000685">
    <property type="protein sequence ID" value="ABQ04577.1"/>
    <property type="molecule type" value="Genomic_DNA"/>
</dbReference>
<dbReference type="RefSeq" id="WP_012023621.1">
    <property type="nucleotide sequence ID" value="NZ_MUGZ01000017.1"/>
</dbReference>
<dbReference type="SMR" id="A5FJP5"/>
<dbReference type="STRING" id="376686.Fjoh_1545"/>
<dbReference type="KEGG" id="fjo:Fjoh_1545"/>
<dbReference type="eggNOG" id="COG0261">
    <property type="taxonomic scope" value="Bacteria"/>
</dbReference>
<dbReference type="HOGENOM" id="CLU_061463_1_2_10"/>
<dbReference type="OrthoDB" id="9813334at2"/>
<dbReference type="Proteomes" id="UP000006694">
    <property type="component" value="Chromosome"/>
</dbReference>
<dbReference type="GO" id="GO:0005737">
    <property type="term" value="C:cytoplasm"/>
    <property type="evidence" value="ECO:0007669"/>
    <property type="project" value="UniProtKB-ARBA"/>
</dbReference>
<dbReference type="GO" id="GO:1990904">
    <property type="term" value="C:ribonucleoprotein complex"/>
    <property type="evidence" value="ECO:0007669"/>
    <property type="project" value="UniProtKB-KW"/>
</dbReference>
<dbReference type="GO" id="GO:0005840">
    <property type="term" value="C:ribosome"/>
    <property type="evidence" value="ECO:0007669"/>
    <property type="project" value="UniProtKB-KW"/>
</dbReference>
<dbReference type="GO" id="GO:0019843">
    <property type="term" value="F:rRNA binding"/>
    <property type="evidence" value="ECO:0007669"/>
    <property type="project" value="UniProtKB-UniRule"/>
</dbReference>
<dbReference type="GO" id="GO:0003735">
    <property type="term" value="F:structural constituent of ribosome"/>
    <property type="evidence" value="ECO:0007669"/>
    <property type="project" value="InterPro"/>
</dbReference>
<dbReference type="GO" id="GO:0006412">
    <property type="term" value="P:translation"/>
    <property type="evidence" value="ECO:0007669"/>
    <property type="project" value="UniProtKB-UniRule"/>
</dbReference>
<dbReference type="HAMAP" id="MF_01363">
    <property type="entry name" value="Ribosomal_bL21"/>
    <property type="match status" value="1"/>
</dbReference>
<dbReference type="InterPro" id="IPR028909">
    <property type="entry name" value="bL21-like"/>
</dbReference>
<dbReference type="InterPro" id="IPR036164">
    <property type="entry name" value="bL21-like_sf"/>
</dbReference>
<dbReference type="InterPro" id="IPR001787">
    <property type="entry name" value="Ribosomal_bL21"/>
</dbReference>
<dbReference type="InterPro" id="IPR018258">
    <property type="entry name" value="Ribosomal_bL21_CS"/>
</dbReference>
<dbReference type="NCBIfam" id="TIGR00061">
    <property type="entry name" value="L21"/>
    <property type="match status" value="1"/>
</dbReference>
<dbReference type="PANTHER" id="PTHR21349">
    <property type="entry name" value="50S RIBOSOMAL PROTEIN L21"/>
    <property type="match status" value="1"/>
</dbReference>
<dbReference type="PANTHER" id="PTHR21349:SF0">
    <property type="entry name" value="LARGE RIBOSOMAL SUBUNIT PROTEIN BL21M"/>
    <property type="match status" value="1"/>
</dbReference>
<dbReference type="Pfam" id="PF00829">
    <property type="entry name" value="Ribosomal_L21p"/>
    <property type="match status" value="1"/>
</dbReference>
<dbReference type="SUPFAM" id="SSF141091">
    <property type="entry name" value="L21p-like"/>
    <property type="match status" value="1"/>
</dbReference>
<dbReference type="PROSITE" id="PS01169">
    <property type="entry name" value="RIBOSOMAL_L21"/>
    <property type="match status" value="1"/>
</dbReference>
<protein>
    <recommendedName>
        <fullName evidence="1">Large ribosomal subunit protein bL21</fullName>
    </recommendedName>
    <alternativeName>
        <fullName evidence="3">50S ribosomal protein L21</fullName>
    </alternativeName>
</protein>
<reference key="1">
    <citation type="journal article" date="2009" name="Appl. Environ. Microbiol.">
        <title>Novel features of the polysaccharide-digesting gliding bacterium Flavobacterium johnsoniae as revealed by genome sequence analysis.</title>
        <authorList>
            <person name="McBride M.J."/>
            <person name="Xie G."/>
            <person name="Martens E.C."/>
            <person name="Lapidus A."/>
            <person name="Henrissat B."/>
            <person name="Rhodes R.G."/>
            <person name="Goltsman E."/>
            <person name="Wang W."/>
            <person name="Xu J."/>
            <person name="Hunnicutt D.W."/>
            <person name="Staroscik A.M."/>
            <person name="Hoover T.R."/>
            <person name="Cheng Y.Q."/>
            <person name="Stein J.L."/>
        </authorList>
    </citation>
    <scope>NUCLEOTIDE SEQUENCE [LARGE SCALE GENOMIC DNA]</scope>
    <source>
        <strain>ATCC 17061 / DSM 2064 / JCM 8514 / BCRC 14874 / CCUG 350202 / NBRC 14942 / NCIMB 11054 / UW101</strain>
    </source>
</reference>
<accession>A5FJP5</accession>
<proteinExistence type="inferred from homology"/>
<comment type="function">
    <text evidence="1">This protein binds to 23S rRNA in the presence of protein L20.</text>
</comment>
<comment type="subunit">
    <text evidence="1">Part of the 50S ribosomal subunit. Contacts protein L20.</text>
</comment>
<comment type="similarity">
    <text evidence="1">Belongs to the bacterial ribosomal protein bL21 family.</text>
</comment>
<gene>
    <name evidence="1" type="primary">rplU</name>
    <name type="ordered locus">Fjoh_1545</name>
</gene>
<evidence type="ECO:0000255" key="1">
    <source>
        <dbReference type="HAMAP-Rule" id="MF_01363"/>
    </source>
</evidence>
<evidence type="ECO:0000256" key="2">
    <source>
        <dbReference type="SAM" id="MobiDB-lite"/>
    </source>
</evidence>
<evidence type="ECO:0000305" key="3"/>
<name>RL21_FLAJ1</name>
<feature type="chain" id="PRO_1000086980" description="Large ribosomal subunit protein bL21">
    <location>
        <begin position="1"/>
        <end position="147"/>
    </location>
</feature>
<feature type="region of interest" description="Disordered" evidence="2">
    <location>
        <begin position="125"/>
        <end position="147"/>
    </location>
</feature>
<sequence length="147" mass="15868">MYAIVEIAGQQFKVSKDLKVYVHRLANEEGSKVSFDKVLLLDDNGNVTLGAPAIEGASVEAKVLQHLKGDKVIVFKKKRRKGYKKRNGHRQYLTQIVIEGITAAGGTKKAAAKKAVVAEEAAATEEVEAAPKAKKAAPKAKKEATKE</sequence>
<organism>
    <name type="scientific">Flavobacterium johnsoniae (strain ATCC 17061 / DSM 2064 / JCM 8514 / BCRC 14874 / CCUG 350202 / NBRC 14942 / NCIMB 11054 / UW101)</name>
    <name type="common">Cytophaga johnsonae</name>
    <dbReference type="NCBI Taxonomy" id="376686"/>
    <lineage>
        <taxon>Bacteria</taxon>
        <taxon>Pseudomonadati</taxon>
        <taxon>Bacteroidota</taxon>
        <taxon>Flavobacteriia</taxon>
        <taxon>Flavobacteriales</taxon>
        <taxon>Flavobacteriaceae</taxon>
        <taxon>Flavobacterium</taxon>
    </lineage>
</organism>
<keyword id="KW-0687">Ribonucleoprotein</keyword>
<keyword id="KW-0689">Ribosomal protein</keyword>
<keyword id="KW-0694">RNA-binding</keyword>
<keyword id="KW-0699">rRNA-binding</keyword>